<comment type="subcellular location">
    <subcellularLocation>
        <location evidence="1">Cell membrane</location>
        <topology evidence="1">Multi-pass membrane protein</topology>
    </subcellularLocation>
</comment>
<comment type="similarity">
    <text evidence="1">Belongs to the UPF0295 family.</text>
</comment>
<proteinExistence type="inferred from homology"/>
<organism>
    <name type="scientific">Bacillus anthracis (strain A0248)</name>
    <dbReference type="NCBI Taxonomy" id="592021"/>
    <lineage>
        <taxon>Bacteria</taxon>
        <taxon>Bacillati</taxon>
        <taxon>Bacillota</taxon>
        <taxon>Bacilli</taxon>
        <taxon>Bacillales</taxon>
        <taxon>Bacillaceae</taxon>
        <taxon>Bacillus</taxon>
        <taxon>Bacillus cereus group</taxon>
    </lineage>
</organism>
<keyword id="KW-1003">Cell membrane</keyword>
<keyword id="KW-0472">Membrane</keyword>
<keyword id="KW-0812">Transmembrane</keyword>
<keyword id="KW-1133">Transmembrane helix</keyword>
<gene>
    <name type="ordered locus">BAA_0600</name>
</gene>
<name>Y600_BACAA</name>
<feature type="chain" id="PRO_1000185005" description="UPF0295 protein BAA_0600">
    <location>
        <begin position="1"/>
        <end position="118"/>
    </location>
</feature>
<feature type="transmembrane region" description="Helical" evidence="1">
    <location>
        <begin position="12"/>
        <end position="32"/>
    </location>
</feature>
<feature type="transmembrane region" description="Helical" evidence="1">
    <location>
        <begin position="43"/>
        <end position="63"/>
    </location>
</feature>
<sequence>MSIKYSNKINKIRTFALSLVFIGLFIAYLGVFFRENIIIMTTFMMVGFLAVIASTVVYFWIGMLSTKTVQIICPSCDKPTKMLGRVDACMHCNQPLTMDRDLEGKEFDEKYNKKSYKS</sequence>
<protein>
    <recommendedName>
        <fullName evidence="1">UPF0295 protein BAA_0600</fullName>
    </recommendedName>
</protein>
<accession>C3PD00</accession>
<evidence type="ECO:0000255" key="1">
    <source>
        <dbReference type="HAMAP-Rule" id="MF_01502"/>
    </source>
</evidence>
<dbReference type="EMBL" id="CP001598">
    <property type="protein sequence ID" value="ACQ49131.1"/>
    <property type="molecule type" value="Genomic_DNA"/>
</dbReference>
<dbReference type="RefSeq" id="WP_000025061.1">
    <property type="nucleotide sequence ID" value="NC_012659.1"/>
</dbReference>
<dbReference type="GeneID" id="45020586"/>
<dbReference type="KEGG" id="bai:BAA_0600"/>
<dbReference type="HOGENOM" id="CLU_143991_0_0_9"/>
<dbReference type="GO" id="GO:0005886">
    <property type="term" value="C:plasma membrane"/>
    <property type="evidence" value="ECO:0007669"/>
    <property type="project" value="UniProtKB-SubCell"/>
</dbReference>
<dbReference type="HAMAP" id="MF_01502">
    <property type="entry name" value="UPF0295"/>
    <property type="match status" value="1"/>
</dbReference>
<dbReference type="InterPro" id="IPR020912">
    <property type="entry name" value="UPF0295"/>
</dbReference>
<dbReference type="NCBIfam" id="NF002796">
    <property type="entry name" value="PRK02935.1"/>
    <property type="match status" value="1"/>
</dbReference>
<dbReference type="Pfam" id="PF11023">
    <property type="entry name" value="DUF2614"/>
    <property type="match status" value="1"/>
</dbReference>
<reference key="1">
    <citation type="submission" date="2009-04" db="EMBL/GenBank/DDBJ databases">
        <title>Genome sequence of Bacillus anthracis A0248.</title>
        <authorList>
            <person name="Dodson R.J."/>
            <person name="Munk A.C."/>
            <person name="Bruce D."/>
            <person name="Detter C."/>
            <person name="Tapia R."/>
            <person name="Sutton G."/>
            <person name="Sims D."/>
            <person name="Brettin T."/>
        </authorList>
    </citation>
    <scope>NUCLEOTIDE SEQUENCE [LARGE SCALE GENOMIC DNA]</scope>
    <source>
        <strain>A0248</strain>
    </source>
</reference>